<feature type="chain" id="PRO_0000103812" description="Uncharacterized protein Mb1372">
    <location>
        <begin position="1"/>
        <end position="240"/>
    </location>
</feature>
<feature type="transmembrane region" description="Helical" evidence="1">
    <location>
        <begin position="36"/>
        <end position="56"/>
    </location>
</feature>
<feature type="transmembrane region" description="Helical" evidence="1">
    <location>
        <begin position="93"/>
        <end position="113"/>
    </location>
</feature>
<feature type="transmembrane region" description="Helical" evidence="1">
    <location>
        <begin position="115"/>
        <end position="135"/>
    </location>
</feature>
<feature type="transmembrane region" description="Helical" evidence="1">
    <location>
        <begin position="146"/>
        <end position="166"/>
    </location>
</feature>
<feature type="transmembrane region" description="Helical" evidence="1">
    <location>
        <begin position="172"/>
        <end position="192"/>
    </location>
</feature>
<feature type="transmembrane region" description="Helical" evidence="1">
    <location>
        <begin position="198"/>
        <end position="218"/>
    </location>
</feature>
<feature type="region of interest" description="Disordered" evidence="2">
    <location>
        <begin position="1"/>
        <end position="32"/>
    </location>
</feature>
<feature type="compositionally biased region" description="Basic residues" evidence="2">
    <location>
        <begin position="1"/>
        <end position="11"/>
    </location>
</feature>
<feature type="compositionally biased region" description="Low complexity" evidence="2">
    <location>
        <begin position="17"/>
        <end position="31"/>
    </location>
</feature>
<protein>
    <recommendedName>
        <fullName>Uncharacterized protein Mb1372</fullName>
    </recommendedName>
</protein>
<name>Y1372_MYCBO</name>
<organism>
    <name type="scientific">Mycobacterium bovis (strain ATCC BAA-935 / AF2122/97)</name>
    <dbReference type="NCBI Taxonomy" id="233413"/>
    <lineage>
        <taxon>Bacteria</taxon>
        <taxon>Bacillati</taxon>
        <taxon>Actinomycetota</taxon>
        <taxon>Actinomycetes</taxon>
        <taxon>Mycobacteriales</taxon>
        <taxon>Mycobacteriaceae</taxon>
        <taxon>Mycobacterium</taxon>
        <taxon>Mycobacterium tuberculosis complex</taxon>
    </lineage>
</organism>
<reference key="1">
    <citation type="journal article" date="2003" name="Proc. Natl. Acad. Sci. U.S.A.">
        <title>The complete genome sequence of Mycobacterium bovis.</title>
        <authorList>
            <person name="Garnier T."/>
            <person name="Eiglmeier K."/>
            <person name="Camus J.-C."/>
            <person name="Medina N."/>
            <person name="Mansoor H."/>
            <person name="Pryor M."/>
            <person name="Duthoy S."/>
            <person name="Grondin S."/>
            <person name="Lacroix C."/>
            <person name="Monsempe C."/>
            <person name="Simon S."/>
            <person name="Harris B."/>
            <person name="Atkin R."/>
            <person name="Doggett J."/>
            <person name="Mayes R."/>
            <person name="Keating L."/>
            <person name="Wheeler P.R."/>
            <person name="Parkhill J."/>
            <person name="Barrell B.G."/>
            <person name="Cole S.T."/>
            <person name="Gordon S.V."/>
            <person name="Hewinson R.G."/>
        </authorList>
    </citation>
    <scope>NUCLEOTIDE SEQUENCE [LARGE SCALE GENOMIC DNA]</scope>
    <source>
        <strain>ATCC BAA-935 / AF2122/97</strain>
    </source>
</reference>
<reference key="2">
    <citation type="journal article" date="2017" name="Genome Announc.">
        <title>Updated reference genome sequence and annotation of Mycobacterium bovis AF2122/97.</title>
        <authorList>
            <person name="Malone K.M."/>
            <person name="Farrell D."/>
            <person name="Stuber T.P."/>
            <person name="Schubert O.T."/>
            <person name="Aebersold R."/>
            <person name="Robbe-Austerman S."/>
            <person name="Gordon S.V."/>
        </authorList>
    </citation>
    <scope>NUCLEOTIDE SEQUENCE [LARGE SCALE GENOMIC DNA]</scope>
    <scope>GENOME REANNOTATION</scope>
    <source>
        <strain>ATCC BAA-935 / AF2122/97</strain>
    </source>
</reference>
<proteinExistence type="predicted"/>
<gene>
    <name type="ordered locus">BQ2027_MB1372</name>
</gene>
<dbReference type="EMBL" id="LT708304">
    <property type="protein sequence ID" value="SIT99975.1"/>
    <property type="molecule type" value="Genomic_DNA"/>
</dbReference>
<dbReference type="RefSeq" id="NP_855026.1">
    <property type="nucleotide sequence ID" value="NC_002945.3"/>
</dbReference>
<dbReference type="RefSeq" id="WP_003898831.1">
    <property type="nucleotide sequence ID" value="NC_002945.4"/>
</dbReference>
<dbReference type="MEROPS" id="S54.029"/>
<dbReference type="KEGG" id="mbo:BQ2027_MB1372"/>
<dbReference type="PATRIC" id="fig|233413.5.peg.1504"/>
<dbReference type="Proteomes" id="UP000001419">
    <property type="component" value="Chromosome"/>
</dbReference>
<dbReference type="GO" id="GO:0005886">
    <property type="term" value="C:plasma membrane"/>
    <property type="evidence" value="ECO:0007669"/>
    <property type="project" value="UniProtKB-SubCell"/>
</dbReference>
<dbReference type="GO" id="GO:0004252">
    <property type="term" value="F:serine-type endopeptidase activity"/>
    <property type="evidence" value="ECO:0007669"/>
    <property type="project" value="InterPro"/>
</dbReference>
<dbReference type="FunFam" id="1.20.1540.10:FF:000029">
    <property type="entry name" value="Rhomboid protease 2"/>
    <property type="match status" value="1"/>
</dbReference>
<dbReference type="Gene3D" id="1.20.1540.10">
    <property type="entry name" value="Rhomboid-like"/>
    <property type="match status" value="1"/>
</dbReference>
<dbReference type="InterPro" id="IPR022764">
    <property type="entry name" value="Peptidase_S54_rhomboid_dom"/>
</dbReference>
<dbReference type="InterPro" id="IPR035952">
    <property type="entry name" value="Rhomboid-like_sf"/>
</dbReference>
<dbReference type="PANTHER" id="PTHR43066">
    <property type="entry name" value="RHOMBOID-RELATED PROTEIN"/>
    <property type="match status" value="1"/>
</dbReference>
<dbReference type="Pfam" id="PF01694">
    <property type="entry name" value="Rhomboid"/>
    <property type="match status" value="1"/>
</dbReference>
<dbReference type="SUPFAM" id="SSF144091">
    <property type="entry name" value="Rhomboid-like"/>
    <property type="match status" value="1"/>
</dbReference>
<accession>P64816</accession>
<accession>A0A1R3XY31</accession>
<accession>Q10647</accession>
<accession>X2BHL6</accession>
<evidence type="ECO:0000255" key="1"/>
<evidence type="ECO:0000256" key="2">
    <source>
        <dbReference type="SAM" id="MobiDB-lite"/>
    </source>
</evidence>
<evidence type="ECO:0000305" key="3"/>
<keyword id="KW-1003">Cell membrane</keyword>
<keyword id="KW-0472">Membrane</keyword>
<keyword id="KW-1185">Reference proteome</keyword>
<keyword id="KW-0812">Transmembrane</keyword>
<keyword id="KW-1133">Transmembrane helix</keyword>
<comment type="subcellular location">
    <subcellularLocation>
        <location evidence="3">Cell membrane</location>
        <topology evidence="3">Multi-pass membrane protein</topology>
    </subcellularLocation>
</comment>
<comment type="similarity">
    <text evidence="3">To M.leprae ML1171.</text>
</comment>
<sequence length="240" mass="25703">MGMTPRRKRRGGAVQITRPTGRPRTPTTQTTKRPRWVVGGTTILTFVALLYLVELIDQLSGSRLDVNGIRPLKTDGLWGVIFAPLLHANWHHLMANTIPLLVLGFLMTLAGLSRFVWATAIIWILGGLGTWLIGNVGSSCGPTDHIGASGLIFGWLAFLLVFGLFVRKGWDIVIGLVVLFVYGGILLGAMPVLGQCGGVSWQGHLSGAVAGVVAAYLLSAPERKARALKRAGARSGHPKL</sequence>